<accession>P75428</accession>
<protein>
    <recommendedName>
        <fullName evidence="1">Glycerol-3-phosphate acyltransferase</fullName>
    </recommendedName>
    <alternativeName>
        <fullName evidence="1">Acyl-PO4 G3P acyltransferase</fullName>
    </alternativeName>
    <alternativeName>
        <fullName evidence="1">Acyl-phosphate--glycerol-3-phosphate acyltransferase</fullName>
    </alternativeName>
    <alternativeName>
        <fullName evidence="1">G3P acyltransferase</fullName>
        <shortName evidence="1">GPAT</shortName>
        <ecNumber evidence="1">2.3.1.275</ecNumber>
    </alternativeName>
    <alternativeName>
        <fullName evidence="1">Lysophosphatidic acid synthase</fullName>
        <shortName evidence="1">LPA synthase</shortName>
    </alternativeName>
</protein>
<feature type="chain" id="PRO_0000188406" description="Glycerol-3-phosphate acyltransferase">
    <location>
        <begin position="1"/>
        <end position="239"/>
    </location>
</feature>
<feature type="transmembrane region" description="Helical" evidence="1">
    <location>
        <begin position="6"/>
        <end position="26"/>
    </location>
</feature>
<feature type="transmembrane region" description="Helical" evidence="1">
    <location>
        <begin position="61"/>
        <end position="81"/>
    </location>
</feature>
<feature type="transmembrane region" description="Helical" evidence="1">
    <location>
        <begin position="99"/>
        <end position="119"/>
    </location>
</feature>
<feature type="transmembrane region" description="Helical" evidence="1">
    <location>
        <begin position="135"/>
        <end position="155"/>
    </location>
</feature>
<feature type="transmembrane region" description="Helical" evidence="1">
    <location>
        <begin position="159"/>
        <end position="179"/>
    </location>
</feature>
<feature type="transmembrane region" description="Helical" evidence="1">
    <location>
        <begin position="199"/>
        <end position="219"/>
    </location>
</feature>
<proteinExistence type="inferred from homology"/>
<evidence type="ECO:0000255" key="1">
    <source>
        <dbReference type="HAMAP-Rule" id="MF_01043"/>
    </source>
</evidence>
<gene>
    <name evidence="1" type="primary">plsY</name>
    <name type="ordered locus">MPN_350</name>
    <name type="ORF">MP486</name>
</gene>
<sequence>MNAASAIALLIVFSLVIGYLMGSVMFADVFGKILNKDVRKLGSKNPGATNSIRVFGLKIGFLVGLCDALKGFLAFVFSFLIFSFWLQQYLNVNQYQKVYYLTYLSCFAATIGHIFPLYFKFKGGKAIATTGGSLLAISLWWFVICLVLWLLVTLITKYVSLASLVTFFILAIIILVPWLDYLYFFKPNPINAISYQNDWYIILFFVLWYWPLTIAVFWLHRKNIHRLLNKTENKVTQLN</sequence>
<name>PLSY_MYCPN</name>
<keyword id="KW-1003">Cell membrane</keyword>
<keyword id="KW-0444">Lipid biosynthesis</keyword>
<keyword id="KW-0443">Lipid metabolism</keyword>
<keyword id="KW-0472">Membrane</keyword>
<keyword id="KW-0594">Phospholipid biosynthesis</keyword>
<keyword id="KW-1208">Phospholipid metabolism</keyword>
<keyword id="KW-1185">Reference proteome</keyword>
<keyword id="KW-0808">Transferase</keyword>
<keyword id="KW-0812">Transmembrane</keyword>
<keyword id="KW-1133">Transmembrane helix</keyword>
<reference key="1">
    <citation type="journal article" date="1996" name="Nucleic Acids Res.">
        <title>Complete sequence analysis of the genome of the bacterium Mycoplasma pneumoniae.</title>
        <authorList>
            <person name="Himmelreich R."/>
            <person name="Hilbert H."/>
            <person name="Plagens H."/>
            <person name="Pirkl E."/>
            <person name="Li B.-C."/>
            <person name="Herrmann R."/>
        </authorList>
    </citation>
    <scope>NUCLEOTIDE SEQUENCE [LARGE SCALE GENOMIC DNA]</scope>
    <source>
        <strain>ATCC 29342 / M129 / Subtype 1</strain>
    </source>
</reference>
<organism>
    <name type="scientific">Mycoplasma pneumoniae (strain ATCC 29342 / M129 / Subtype 1)</name>
    <name type="common">Mycoplasmoides pneumoniae</name>
    <dbReference type="NCBI Taxonomy" id="272634"/>
    <lineage>
        <taxon>Bacteria</taxon>
        <taxon>Bacillati</taxon>
        <taxon>Mycoplasmatota</taxon>
        <taxon>Mycoplasmoidales</taxon>
        <taxon>Mycoplasmoidaceae</taxon>
        <taxon>Mycoplasmoides</taxon>
    </lineage>
</organism>
<dbReference type="EC" id="2.3.1.275" evidence="1"/>
<dbReference type="EMBL" id="U00089">
    <property type="protein sequence ID" value="AAB96134.1"/>
    <property type="molecule type" value="Genomic_DNA"/>
</dbReference>
<dbReference type="PIR" id="S73812">
    <property type="entry name" value="S73812"/>
</dbReference>
<dbReference type="RefSeq" id="NP_110038.1">
    <property type="nucleotide sequence ID" value="NC_000912.1"/>
</dbReference>
<dbReference type="RefSeq" id="WP_010874706.1">
    <property type="nucleotide sequence ID" value="NZ_OU342337.1"/>
</dbReference>
<dbReference type="SMR" id="P75428"/>
<dbReference type="IntAct" id="P75428">
    <property type="interactions" value="2"/>
</dbReference>
<dbReference type="STRING" id="272634.MPN_350"/>
<dbReference type="EnsemblBacteria" id="AAB96134">
    <property type="protein sequence ID" value="AAB96134"/>
    <property type="gene ID" value="MPN_350"/>
</dbReference>
<dbReference type="GeneID" id="66608993"/>
<dbReference type="KEGG" id="mpn:MPN_350"/>
<dbReference type="PATRIC" id="fig|272634.6.peg.377"/>
<dbReference type="HOGENOM" id="CLU_081254_3_0_14"/>
<dbReference type="OrthoDB" id="9777124at2"/>
<dbReference type="BioCyc" id="MPNE272634:G1GJ3-553-MONOMER"/>
<dbReference type="UniPathway" id="UPA00085"/>
<dbReference type="Proteomes" id="UP000000808">
    <property type="component" value="Chromosome"/>
</dbReference>
<dbReference type="GO" id="GO:0005886">
    <property type="term" value="C:plasma membrane"/>
    <property type="evidence" value="ECO:0007669"/>
    <property type="project" value="UniProtKB-SubCell"/>
</dbReference>
<dbReference type="GO" id="GO:0043772">
    <property type="term" value="F:acyl-phosphate glycerol-3-phosphate acyltransferase activity"/>
    <property type="evidence" value="ECO:0007669"/>
    <property type="project" value="UniProtKB-UniRule"/>
</dbReference>
<dbReference type="GO" id="GO:0008654">
    <property type="term" value="P:phospholipid biosynthetic process"/>
    <property type="evidence" value="ECO:0007669"/>
    <property type="project" value="UniProtKB-UniRule"/>
</dbReference>
<dbReference type="HAMAP" id="MF_01043">
    <property type="entry name" value="PlsY"/>
    <property type="match status" value="1"/>
</dbReference>
<dbReference type="InterPro" id="IPR003811">
    <property type="entry name" value="G3P_acylTferase_PlsY"/>
</dbReference>
<dbReference type="NCBIfam" id="TIGR00023">
    <property type="entry name" value="glycerol-3-phosphate 1-O-acyltransferase PlsY"/>
    <property type="match status" value="1"/>
</dbReference>
<dbReference type="PANTHER" id="PTHR30309:SF0">
    <property type="entry name" value="GLYCEROL-3-PHOSPHATE ACYLTRANSFERASE-RELATED"/>
    <property type="match status" value="1"/>
</dbReference>
<dbReference type="PANTHER" id="PTHR30309">
    <property type="entry name" value="INNER MEMBRANE PROTEIN YGIH"/>
    <property type="match status" value="1"/>
</dbReference>
<dbReference type="Pfam" id="PF02660">
    <property type="entry name" value="G3P_acyltransf"/>
    <property type="match status" value="1"/>
</dbReference>
<dbReference type="SMART" id="SM01207">
    <property type="entry name" value="G3P_acyltransf"/>
    <property type="match status" value="1"/>
</dbReference>
<comment type="function">
    <text evidence="1">Catalyzes the transfer of an acyl group from acyl-phosphate (acyl-PO(4)) to glycerol-3-phosphate (G3P) to form lysophosphatidic acid (LPA). This enzyme utilizes acyl-phosphate as fatty acyl donor, but not acyl-CoA or acyl-ACP.</text>
</comment>
<comment type="catalytic activity">
    <reaction evidence="1">
        <text>an acyl phosphate + sn-glycerol 3-phosphate = a 1-acyl-sn-glycero-3-phosphate + phosphate</text>
        <dbReference type="Rhea" id="RHEA:34075"/>
        <dbReference type="ChEBI" id="CHEBI:43474"/>
        <dbReference type="ChEBI" id="CHEBI:57597"/>
        <dbReference type="ChEBI" id="CHEBI:57970"/>
        <dbReference type="ChEBI" id="CHEBI:59918"/>
        <dbReference type="EC" id="2.3.1.275"/>
    </reaction>
</comment>
<comment type="pathway">
    <text evidence="1">Lipid metabolism; phospholipid metabolism.</text>
</comment>
<comment type="subunit">
    <text evidence="1">Probably interacts with PlsX.</text>
</comment>
<comment type="subcellular location">
    <subcellularLocation>
        <location evidence="1">Cell membrane</location>
        <topology evidence="1">Multi-pass membrane protein</topology>
    </subcellularLocation>
</comment>
<comment type="similarity">
    <text evidence="1">Belongs to the PlsY family.</text>
</comment>